<proteinExistence type="inferred from homology"/>
<keyword id="KW-0150">Chloroplast</keyword>
<keyword id="KW-0934">Plastid</keyword>
<keyword id="KW-0687">Ribonucleoprotein</keyword>
<keyword id="KW-0689">Ribosomal protein</keyword>
<keyword id="KW-0694">RNA-binding</keyword>
<keyword id="KW-0699">rRNA-binding</keyword>
<dbReference type="EMBL" id="Z29226">
    <property type="protein sequence ID" value="CAA82425.1"/>
    <property type="molecule type" value="Genomic_DNA"/>
</dbReference>
<dbReference type="PIR" id="S41257">
    <property type="entry name" value="S41257"/>
</dbReference>
<dbReference type="SMR" id="P69630"/>
<dbReference type="GO" id="GO:0009507">
    <property type="term" value="C:chloroplast"/>
    <property type="evidence" value="ECO:0007669"/>
    <property type="project" value="UniProtKB-SubCell"/>
</dbReference>
<dbReference type="GO" id="GO:0015935">
    <property type="term" value="C:small ribosomal subunit"/>
    <property type="evidence" value="ECO:0007669"/>
    <property type="project" value="InterPro"/>
</dbReference>
<dbReference type="GO" id="GO:0019843">
    <property type="term" value="F:rRNA binding"/>
    <property type="evidence" value="ECO:0007669"/>
    <property type="project" value="UniProtKB-KW"/>
</dbReference>
<dbReference type="GO" id="GO:0003735">
    <property type="term" value="F:structural constituent of ribosome"/>
    <property type="evidence" value="ECO:0007669"/>
    <property type="project" value="InterPro"/>
</dbReference>
<dbReference type="GO" id="GO:0042274">
    <property type="term" value="P:ribosomal small subunit biogenesis"/>
    <property type="evidence" value="ECO:0007669"/>
    <property type="project" value="TreeGrafter"/>
</dbReference>
<dbReference type="GO" id="GO:0006412">
    <property type="term" value="P:translation"/>
    <property type="evidence" value="ECO:0007669"/>
    <property type="project" value="InterPro"/>
</dbReference>
<dbReference type="CDD" id="cd00165">
    <property type="entry name" value="S4"/>
    <property type="match status" value="1"/>
</dbReference>
<dbReference type="FunFam" id="1.10.1050.10:FF:000002">
    <property type="entry name" value="30S ribosomal protein S4, chloroplastic"/>
    <property type="match status" value="1"/>
</dbReference>
<dbReference type="FunFam" id="3.10.290.10:FF:000081">
    <property type="entry name" value="30S ribosomal protein S4, chloroplastic"/>
    <property type="match status" value="1"/>
</dbReference>
<dbReference type="Gene3D" id="1.10.1050.10">
    <property type="entry name" value="Ribosomal Protein S4 Delta 41, Chain A, domain 1"/>
    <property type="match status" value="1"/>
</dbReference>
<dbReference type="Gene3D" id="3.10.290.10">
    <property type="entry name" value="RNA-binding S4 domain"/>
    <property type="match status" value="1"/>
</dbReference>
<dbReference type="HAMAP" id="MF_01306_B">
    <property type="entry name" value="Ribosomal_uS4_B"/>
    <property type="match status" value="1"/>
</dbReference>
<dbReference type="InterPro" id="IPR022801">
    <property type="entry name" value="Ribosomal_uS4"/>
</dbReference>
<dbReference type="InterPro" id="IPR005709">
    <property type="entry name" value="Ribosomal_uS4_bac-type"/>
</dbReference>
<dbReference type="InterPro" id="IPR018079">
    <property type="entry name" value="Ribosomal_uS4_CS"/>
</dbReference>
<dbReference type="InterPro" id="IPR001912">
    <property type="entry name" value="Ribosomal_uS4_N"/>
</dbReference>
<dbReference type="InterPro" id="IPR002942">
    <property type="entry name" value="S4_RNA-bd"/>
</dbReference>
<dbReference type="InterPro" id="IPR036986">
    <property type="entry name" value="S4_RNA-bd_sf"/>
</dbReference>
<dbReference type="NCBIfam" id="NF003717">
    <property type="entry name" value="PRK05327.1"/>
    <property type="match status" value="1"/>
</dbReference>
<dbReference type="NCBIfam" id="TIGR01017">
    <property type="entry name" value="rpsD_bact"/>
    <property type="match status" value="1"/>
</dbReference>
<dbReference type="PANTHER" id="PTHR11831">
    <property type="entry name" value="30S 40S RIBOSOMAL PROTEIN"/>
    <property type="match status" value="1"/>
</dbReference>
<dbReference type="PANTHER" id="PTHR11831:SF4">
    <property type="entry name" value="SMALL RIBOSOMAL SUBUNIT PROTEIN US4M"/>
    <property type="match status" value="1"/>
</dbReference>
<dbReference type="Pfam" id="PF00163">
    <property type="entry name" value="Ribosomal_S4"/>
    <property type="match status" value="1"/>
</dbReference>
<dbReference type="Pfam" id="PF01479">
    <property type="entry name" value="S4"/>
    <property type="match status" value="1"/>
</dbReference>
<dbReference type="SMART" id="SM01390">
    <property type="entry name" value="Ribosomal_S4"/>
    <property type="match status" value="1"/>
</dbReference>
<dbReference type="SMART" id="SM00363">
    <property type="entry name" value="S4"/>
    <property type="match status" value="1"/>
</dbReference>
<dbReference type="SUPFAM" id="SSF55174">
    <property type="entry name" value="Alpha-L RNA-binding motif"/>
    <property type="match status" value="1"/>
</dbReference>
<dbReference type="PROSITE" id="PS00632">
    <property type="entry name" value="RIBOSOMAL_S4"/>
    <property type="match status" value="1"/>
</dbReference>
<dbReference type="PROSITE" id="PS50889">
    <property type="entry name" value="S4"/>
    <property type="match status" value="1"/>
</dbReference>
<organism>
    <name type="scientific">Alopecurus pratensis</name>
    <name type="common">Meadow foxtail</name>
    <dbReference type="NCBI Taxonomy" id="15304"/>
    <lineage>
        <taxon>Eukaryota</taxon>
        <taxon>Viridiplantae</taxon>
        <taxon>Streptophyta</taxon>
        <taxon>Embryophyta</taxon>
        <taxon>Tracheophyta</taxon>
        <taxon>Spermatophyta</taxon>
        <taxon>Magnoliopsida</taxon>
        <taxon>Liliopsida</taxon>
        <taxon>Poales</taxon>
        <taxon>Poaceae</taxon>
        <taxon>BOP clade</taxon>
        <taxon>Pooideae</taxon>
        <taxon>Poodae</taxon>
        <taxon>Poeae</taxon>
        <taxon>Poeae Chloroplast Group 2 (Poeae type)</taxon>
        <taxon>Poodinae</taxon>
        <taxon>Alopecurinae</taxon>
        <taxon>Alopecurus</taxon>
    </lineage>
</organism>
<comment type="function">
    <text evidence="1">One of the primary rRNA binding proteins, it binds directly to 16S rRNA where it nucleates assembly of the body of the 30S subunit.</text>
</comment>
<comment type="function">
    <text evidence="1">With S5 and S12 plays an important role in translational accuracy.</text>
</comment>
<comment type="subunit">
    <text evidence="1">Part of the 30S ribosomal subunit. Contacts protein S5. The interaction surface between S4 and S5 is involved in control of translational fidelity (By similarity).</text>
</comment>
<comment type="subcellular location">
    <subcellularLocation>
        <location>Plastid</location>
        <location>Chloroplast</location>
    </subcellularLocation>
</comment>
<comment type="similarity">
    <text evidence="3">Belongs to the universal ribosomal protein uS4 family.</text>
</comment>
<sequence>MSRYRGPRLKKIRRLGALPGLTRKTPKSGSNLKKKFHSGKKEQYRIRLQEKQKLRFHYGLTERQLLRYVHIAGKAKRSTGQVLLQLLEMRLDNILFRLGMASTIPGARQLVNHRHILVNGRIVNIPSFRCKPRDIITTKDNQRSKGLVQNFIASSDPGKLPKHLTIDTLEYKGLVNKILDRKWVGLKINELLVVEY</sequence>
<protein>
    <recommendedName>
        <fullName evidence="3">Small ribosomal subunit protein uS4c</fullName>
    </recommendedName>
    <alternativeName>
        <fullName>30S ribosomal protein S4, chloroplastic</fullName>
    </alternativeName>
</protein>
<name>RR4_ALOPR</name>
<feature type="chain" id="PRO_0000132528" description="Small ribosomal subunit protein uS4c">
    <location>
        <begin position="1"/>
        <end position="196" status="greater than"/>
    </location>
</feature>
<feature type="domain" description="S4 RNA-binding">
    <location>
        <begin position="89"/>
        <end position="169"/>
    </location>
</feature>
<feature type="region of interest" description="Disordered" evidence="2">
    <location>
        <begin position="16"/>
        <end position="36"/>
    </location>
</feature>
<feature type="non-terminal residue">
    <location>
        <position position="196"/>
    </location>
</feature>
<gene>
    <name type="primary">rps4</name>
</gene>
<accession>P69630</accession>
<accession>P36445</accession>
<accession>P36453</accession>
<accession>P36455</accession>
<accession>P36462</accession>
<evidence type="ECO:0000250" key="1"/>
<evidence type="ECO:0000256" key="2">
    <source>
        <dbReference type="SAM" id="MobiDB-lite"/>
    </source>
</evidence>
<evidence type="ECO:0000305" key="3"/>
<geneLocation type="chloroplast"/>
<reference key="1">
    <citation type="journal article" date="1994" name="Plant Syst. Evol.">
        <title>The chloroplast gene rps4 as a tool for the study of Poaceae phylogeny.</title>
        <authorList>
            <person name="Nadot S."/>
            <person name="Bajon R."/>
            <person name="Lejeune B."/>
        </authorList>
        <dbReference type="AGRICOLA" id="IND20417698"/>
    </citation>
    <scope>NUCLEOTIDE SEQUENCE [GENOMIC DNA]</scope>
</reference>